<comment type="function">
    <text evidence="1">An enzyme involved in the biosynthesis of bilin.</text>
</comment>
<comment type="interaction">
    <interactant intactId="EBI-931834">
        <id>P29729</id>
    </interactant>
    <interactant intactId="EBI-931840">
        <id>P29730</id>
        <label>pecF</label>
    </interactant>
    <organismsDiffer>false</organismsDiffer>
    <experiments>2</experiments>
</comment>
<comment type="similarity">
    <text evidence="2">Belongs to the CpcE/RpcE/PecE family.</text>
</comment>
<reference key="1">
    <citation type="submission" date="1992-01" db="EMBL/GenBank/DDBJ databases">
        <title>Structure and molecular evolution of the gene cluster encoding proteins of the rod substructure of the phycobilisome from the cyanobacterium Mastigocadus laminosus.</title>
        <authorList>
            <person name="Kufer W."/>
            <person name="Hoegner A."/>
            <person name="Eberlein M."/>
            <person name="Mayer K."/>
            <person name="Buchner A."/>
            <person name="Gottschalk L."/>
        </authorList>
    </citation>
    <scope>NUCLEOTIDE SEQUENCE [GENOMIC DNA]</scope>
</reference>
<organism>
    <name type="scientific">Mastigocladus laminosus</name>
    <name type="common">Fischerella sp.</name>
    <dbReference type="NCBI Taxonomy" id="83541"/>
    <lineage>
        <taxon>Bacteria</taxon>
        <taxon>Bacillati</taxon>
        <taxon>Cyanobacteriota</taxon>
        <taxon>Cyanophyceae</taxon>
        <taxon>Nostocales</taxon>
        <taxon>Hapalosiphonaceae</taxon>
        <taxon>Mastigocladus</taxon>
    </lineage>
</organism>
<gene>
    <name type="primary">pecE</name>
</gene>
<protein>
    <recommendedName>
        <fullName>Bilin biosynthesis protein PecE</fullName>
    </recommendedName>
</protein>
<name>PECE_MASLA</name>
<accession>P29729</accession>
<proteinExistence type="evidence at protein level"/>
<sequence>MTAACCAQPILSPEAAIAALAGEDNQIRYYAAWWLGKHQVQAGCAALCEALFDERYRIPSGGYPLRRQAARALGQLKNPQAVPALIAALACEEDLGLREAVIQALAMIGDRRAVHPLVQLLQSQQPQPYEALIEALATLQVWSARPQIEPFLYHSSERVQCAAARYLYLLTKQPQYLERIVQNLNHDNMYLRWAAIFDLAALGHRQAVDAILAAKVPNSLKLLNLKRILETLLDGDRSQLNNGEFCQNQSDRETIELLFQAIDDLLIQL</sequence>
<feature type="chain" id="PRO_0000199274" description="Bilin biosynthesis protein PecE">
    <location>
        <begin position="1"/>
        <end position="269"/>
    </location>
</feature>
<dbReference type="EMBL" id="M75599">
    <property type="protein sequence ID" value="AAC64647.1"/>
    <property type="molecule type" value="Genomic_DNA"/>
</dbReference>
<dbReference type="SMR" id="P29729"/>
<dbReference type="IntAct" id="P29729">
    <property type="interactions" value="1"/>
</dbReference>
<dbReference type="BRENDA" id="4.4.1.31">
    <property type="organism ID" value="7666"/>
</dbReference>
<dbReference type="GO" id="GO:0030089">
    <property type="term" value="C:phycobilisome"/>
    <property type="evidence" value="ECO:0007669"/>
    <property type="project" value="UniProtKB-KW"/>
</dbReference>
<dbReference type="GO" id="GO:0016829">
    <property type="term" value="F:lyase activity"/>
    <property type="evidence" value="ECO:0007669"/>
    <property type="project" value="UniProtKB-KW"/>
</dbReference>
<dbReference type="GO" id="GO:0016491">
    <property type="term" value="F:oxidoreductase activity"/>
    <property type="evidence" value="ECO:0007669"/>
    <property type="project" value="TreeGrafter"/>
</dbReference>
<dbReference type="Gene3D" id="1.25.10.10">
    <property type="entry name" value="Leucine-rich Repeat Variant"/>
    <property type="match status" value="1"/>
</dbReference>
<dbReference type="InterPro" id="IPR011989">
    <property type="entry name" value="ARM-like"/>
</dbReference>
<dbReference type="InterPro" id="IPR016024">
    <property type="entry name" value="ARM-type_fold"/>
</dbReference>
<dbReference type="InterPro" id="IPR004155">
    <property type="entry name" value="PBS_lyase_HEAT"/>
</dbReference>
<dbReference type="PANTHER" id="PTHR12697:SF5">
    <property type="entry name" value="DEOXYHYPUSINE HYDROXYLASE"/>
    <property type="match status" value="1"/>
</dbReference>
<dbReference type="PANTHER" id="PTHR12697">
    <property type="entry name" value="PBS LYASE HEAT-LIKE PROTEIN"/>
    <property type="match status" value="1"/>
</dbReference>
<dbReference type="Pfam" id="PF13646">
    <property type="entry name" value="HEAT_2"/>
    <property type="match status" value="1"/>
</dbReference>
<dbReference type="Pfam" id="PF03130">
    <property type="entry name" value="HEAT_PBS"/>
    <property type="match status" value="2"/>
</dbReference>
<dbReference type="SMART" id="SM00567">
    <property type="entry name" value="EZ_HEAT"/>
    <property type="match status" value="5"/>
</dbReference>
<dbReference type="SUPFAM" id="SSF48371">
    <property type="entry name" value="ARM repeat"/>
    <property type="match status" value="1"/>
</dbReference>
<keyword id="KW-0042">Antenna complex</keyword>
<keyword id="KW-0456">Lyase</keyword>
<keyword id="KW-0605">Phycobilisome</keyword>
<evidence type="ECO:0000250" key="1"/>
<evidence type="ECO:0000305" key="2"/>